<gene>
    <name evidence="1" type="primary">caiA</name>
    <name type="ordered locus">ECS88_0042</name>
</gene>
<feature type="chain" id="PRO_1000136268" description="Crotonobetainyl-CoA reductase">
    <location>
        <begin position="1"/>
        <end position="380"/>
    </location>
</feature>
<protein>
    <recommendedName>
        <fullName evidence="1">Crotonobetainyl-CoA reductase</fullName>
        <ecNumber evidence="1">1.3.8.13</ecNumber>
    </recommendedName>
    <alternativeName>
        <fullName evidence="1">Crotonobetainyl-CoA dehydrogenase</fullName>
    </alternativeName>
</protein>
<evidence type="ECO:0000255" key="1">
    <source>
        <dbReference type="HAMAP-Rule" id="MF_01052"/>
    </source>
</evidence>
<organism>
    <name type="scientific">Escherichia coli O45:K1 (strain S88 / ExPEC)</name>
    <dbReference type="NCBI Taxonomy" id="585035"/>
    <lineage>
        <taxon>Bacteria</taxon>
        <taxon>Pseudomonadati</taxon>
        <taxon>Pseudomonadota</taxon>
        <taxon>Gammaproteobacteria</taxon>
        <taxon>Enterobacterales</taxon>
        <taxon>Enterobacteriaceae</taxon>
        <taxon>Escherichia</taxon>
    </lineage>
</organism>
<dbReference type="EC" id="1.3.8.13" evidence="1"/>
<dbReference type="EMBL" id="CU928161">
    <property type="protein sequence ID" value="CAR01408.1"/>
    <property type="molecule type" value="Genomic_DNA"/>
</dbReference>
<dbReference type="RefSeq" id="WP_000347117.1">
    <property type="nucleotide sequence ID" value="NC_011742.1"/>
</dbReference>
<dbReference type="SMR" id="B7MAG2"/>
<dbReference type="GeneID" id="93777396"/>
<dbReference type="KEGG" id="ecz:ECS88_0042"/>
<dbReference type="HOGENOM" id="CLU_018204_0_2_6"/>
<dbReference type="UniPathway" id="UPA00117"/>
<dbReference type="Proteomes" id="UP000000747">
    <property type="component" value="Chromosome"/>
</dbReference>
<dbReference type="GO" id="GO:0005737">
    <property type="term" value="C:cytoplasm"/>
    <property type="evidence" value="ECO:0007669"/>
    <property type="project" value="UniProtKB-SubCell"/>
</dbReference>
<dbReference type="GO" id="GO:0003995">
    <property type="term" value="F:acyl-CoA dehydrogenase activity"/>
    <property type="evidence" value="ECO:0007669"/>
    <property type="project" value="InterPro"/>
</dbReference>
<dbReference type="GO" id="GO:0050660">
    <property type="term" value="F:flavin adenine dinucleotide binding"/>
    <property type="evidence" value="ECO:0007669"/>
    <property type="project" value="InterPro"/>
</dbReference>
<dbReference type="GO" id="GO:0009437">
    <property type="term" value="P:carnitine metabolic process"/>
    <property type="evidence" value="ECO:0007669"/>
    <property type="project" value="UniProtKB-UniRule"/>
</dbReference>
<dbReference type="CDD" id="cd00567">
    <property type="entry name" value="ACAD"/>
    <property type="match status" value="1"/>
</dbReference>
<dbReference type="FunFam" id="1.20.140.10:FF:000001">
    <property type="entry name" value="Acyl-CoA dehydrogenase"/>
    <property type="match status" value="1"/>
</dbReference>
<dbReference type="FunFam" id="2.40.110.10:FF:000002">
    <property type="entry name" value="Acyl-CoA dehydrogenase fadE12"/>
    <property type="match status" value="1"/>
</dbReference>
<dbReference type="FunFam" id="1.10.540.10:FF:000005">
    <property type="entry name" value="Crotonobetainyl-CoA reductase"/>
    <property type="match status" value="1"/>
</dbReference>
<dbReference type="Gene3D" id="1.10.540.10">
    <property type="entry name" value="Acyl-CoA dehydrogenase/oxidase, N-terminal domain"/>
    <property type="match status" value="1"/>
</dbReference>
<dbReference type="Gene3D" id="2.40.110.10">
    <property type="entry name" value="Butyryl-CoA Dehydrogenase, subunit A, domain 2"/>
    <property type="match status" value="1"/>
</dbReference>
<dbReference type="Gene3D" id="1.20.140.10">
    <property type="entry name" value="Butyryl-CoA Dehydrogenase, subunit A, domain 3"/>
    <property type="match status" value="1"/>
</dbReference>
<dbReference type="HAMAP" id="MF_01052">
    <property type="entry name" value="CaiA"/>
    <property type="match status" value="1"/>
</dbReference>
<dbReference type="InterPro" id="IPR006089">
    <property type="entry name" value="Acyl-CoA_DH_CS"/>
</dbReference>
<dbReference type="InterPro" id="IPR006091">
    <property type="entry name" value="Acyl-CoA_Oxase/DH_mid-dom"/>
</dbReference>
<dbReference type="InterPro" id="IPR046373">
    <property type="entry name" value="Acyl-CoA_Oxase/DH_mid-dom_sf"/>
</dbReference>
<dbReference type="InterPro" id="IPR036250">
    <property type="entry name" value="AcylCo_DH-like_C"/>
</dbReference>
<dbReference type="InterPro" id="IPR009075">
    <property type="entry name" value="AcylCo_DH/oxidase_C"/>
</dbReference>
<dbReference type="InterPro" id="IPR013786">
    <property type="entry name" value="AcylCoA_DH/ox_N"/>
</dbReference>
<dbReference type="InterPro" id="IPR037069">
    <property type="entry name" value="AcylCoA_DH/ox_N_sf"/>
</dbReference>
<dbReference type="InterPro" id="IPR009100">
    <property type="entry name" value="AcylCoA_DH/oxidase_NM_dom_sf"/>
</dbReference>
<dbReference type="InterPro" id="IPR023450">
    <property type="entry name" value="CaiA"/>
</dbReference>
<dbReference type="NCBIfam" id="NF002885">
    <property type="entry name" value="PRK03354.1"/>
    <property type="match status" value="1"/>
</dbReference>
<dbReference type="PANTHER" id="PTHR43884">
    <property type="entry name" value="ACYL-COA DEHYDROGENASE"/>
    <property type="match status" value="1"/>
</dbReference>
<dbReference type="PANTHER" id="PTHR43884:SF12">
    <property type="entry name" value="ISOVALERYL-COA DEHYDROGENASE, MITOCHONDRIAL-RELATED"/>
    <property type="match status" value="1"/>
</dbReference>
<dbReference type="Pfam" id="PF00441">
    <property type="entry name" value="Acyl-CoA_dh_1"/>
    <property type="match status" value="1"/>
</dbReference>
<dbReference type="Pfam" id="PF02770">
    <property type="entry name" value="Acyl-CoA_dh_M"/>
    <property type="match status" value="1"/>
</dbReference>
<dbReference type="Pfam" id="PF02771">
    <property type="entry name" value="Acyl-CoA_dh_N"/>
    <property type="match status" value="1"/>
</dbReference>
<dbReference type="PIRSF" id="PIRSF016578">
    <property type="entry name" value="HsaA"/>
    <property type="match status" value="1"/>
</dbReference>
<dbReference type="SUPFAM" id="SSF47203">
    <property type="entry name" value="Acyl-CoA dehydrogenase C-terminal domain-like"/>
    <property type="match status" value="1"/>
</dbReference>
<dbReference type="SUPFAM" id="SSF56645">
    <property type="entry name" value="Acyl-CoA dehydrogenase NM domain-like"/>
    <property type="match status" value="1"/>
</dbReference>
<dbReference type="PROSITE" id="PS00072">
    <property type="entry name" value="ACYL_COA_DH_1"/>
    <property type="match status" value="1"/>
</dbReference>
<dbReference type="PROSITE" id="PS00073">
    <property type="entry name" value="ACYL_COA_DH_2"/>
    <property type="match status" value="1"/>
</dbReference>
<comment type="function">
    <text evidence="1">Catalyzes the reduction of crotonobetainyl-CoA to gamma-butyrobetainyl-CoA.</text>
</comment>
<comment type="catalytic activity">
    <reaction evidence="1">
        <text>4-(trimethylamino)butanoyl-CoA + oxidized [electron-transfer flavoprotein] + H(+) = crotonobetainyl-CoA + reduced [electron-transfer flavoprotein]</text>
        <dbReference type="Rhea" id="RHEA:51584"/>
        <dbReference type="Rhea" id="RHEA-COMP:10685"/>
        <dbReference type="Rhea" id="RHEA-COMP:10686"/>
        <dbReference type="ChEBI" id="CHEBI:15378"/>
        <dbReference type="ChEBI" id="CHEBI:57692"/>
        <dbReference type="ChEBI" id="CHEBI:58307"/>
        <dbReference type="ChEBI" id="CHEBI:60933"/>
        <dbReference type="ChEBI" id="CHEBI:61513"/>
        <dbReference type="EC" id="1.3.8.13"/>
    </reaction>
</comment>
<comment type="cofactor">
    <cofactor evidence="1">
        <name>FAD</name>
        <dbReference type="ChEBI" id="CHEBI:57692"/>
    </cofactor>
</comment>
<comment type="pathway">
    <text evidence="1">Amine and polyamine metabolism; carnitine metabolism.</text>
</comment>
<comment type="subunit">
    <text evidence="1">Homotetramer.</text>
</comment>
<comment type="subcellular location">
    <subcellularLocation>
        <location evidence="1">Cytoplasm</location>
    </subcellularLocation>
</comment>
<comment type="similarity">
    <text evidence="1">Belongs to the acyl-CoA dehydrogenase family.</text>
</comment>
<proteinExistence type="inferred from homology"/>
<keyword id="KW-0963">Cytoplasm</keyword>
<keyword id="KW-0274">FAD</keyword>
<keyword id="KW-0285">Flavoprotein</keyword>
<keyword id="KW-0560">Oxidoreductase</keyword>
<keyword id="KW-1185">Reference proteome</keyword>
<sequence>MDFNLNDEQELFVAGIRELMASENWEAYFAECDRDSVYPERFVKALADMGIDSLLIPEEHGGLDAGFVTLAAVWMELGRLGAPTYVLYQLPGGFNTFLREGTQEQIDKIMAFRGTGKQMWNSAITEPGAGSDVGSLKTTYTRRNGKIYLNGSKCFITSSAYTPYIVVMARDGASPDKPVYTEWFVDMSKPGIKVTKLEKLGLRMDSCCEITFDDVELDEKDMFGREGNGFNRVKEEFDHERFLVALTNYGTAMCAFEDAARYANQRVQFGEAIGRFQLIQEKFAHMAIKLNSMKNMLYEAAWKADNGTITSGDAAMCKYFCANAAFEVVDSAMQVLGGVGIAGNHRISRFWRDLRVDRVSGGSDEMQILTLGRAVLKQYR</sequence>
<name>CAIA_ECO45</name>
<reference key="1">
    <citation type="journal article" date="2009" name="PLoS Genet.">
        <title>Organised genome dynamics in the Escherichia coli species results in highly diverse adaptive paths.</title>
        <authorList>
            <person name="Touchon M."/>
            <person name="Hoede C."/>
            <person name="Tenaillon O."/>
            <person name="Barbe V."/>
            <person name="Baeriswyl S."/>
            <person name="Bidet P."/>
            <person name="Bingen E."/>
            <person name="Bonacorsi S."/>
            <person name="Bouchier C."/>
            <person name="Bouvet O."/>
            <person name="Calteau A."/>
            <person name="Chiapello H."/>
            <person name="Clermont O."/>
            <person name="Cruveiller S."/>
            <person name="Danchin A."/>
            <person name="Diard M."/>
            <person name="Dossat C."/>
            <person name="Karoui M.E."/>
            <person name="Frapy E."/>
            <person name="Garry L."/>
            <person name="Ghigo J.M."/>
            <person name="Gilles A.M."/>
            <person name="Johnson J."/>
            <person name="Le Bouguenec C."/>
            <person name="Lescat M."/>
            <person name="Mangenot S."/>
            <person name="Martinez-Jehanne V."/>
            <person name="Matic I."/>
            <person name="Nassif X."/>
            <person name="Oztas S."/>
            <person name="Petit M.A."/>
            <person name="Pichon C."/>
            <person name="Rouy Z."/>
            <person name="Ruf C.S."/>
            <person name="Schneider D."/>
            <person name="Tourret J."/>
            <person name="Vacherie B."/>
            <person name="Vallenet D."/>
            <person name="Medigue C."/>
            <person name="Rocha E.P.C."/>
            <person name="Denamur E."/>
        </authorList>
    </citation>
    <scope>NUCLEOTIDE SEQUENCE [LARGE SCALE GENOMIC DNA]</scope>
    <source>
        <strain>S88 / ExPEC</strain>
    </source>
</reference>
<accession>B7MAG2</accession>